<protein>
    <recommendedName>
        <fullName evidence="1">Large ribosomal subunit protein bL35</fullName>
    </recommendedName>
    <alternativeName>
        <fullName evidence="2">50S ribosomal protein L35</fullName>
    </alternativeName>
</protein>
<feature type="chain" id="PRO_1000050679" description="Large ribosomal subunit protein bL35">
    <location>
        <begin position="1"/>
        <end position="64"/>
    </location>
</feature>
<organism>
    <name type="scientific">Clavibacter michiganensis subsp. michiganensis (strain NCPPB 382)</name>
    <dbReference type="NCBI Taxonomy" id="443906"/>
    <lineage>
        <taxon>Bacteria</taxon>
        <taxon>Bacillati</taxon>
        <taxon>Actinomycetota</taxon>
        <taxon>Actinomycetes</taxon>
        <taxon>Micrococcales</taxon>
        <taxon>Microbacteriaceae</taxon>
        <taxon>Clavibacter</taxon>
    </lineage>
</organism>
<reference key="1">
    <citation type="journal article" date="2008" name="J. Bacteriol.">
        <title>The genome sequence of the tomato-pathogenic actinomycete Clavibacter michiganensis subsp. michiganensis NCPPB382 reveals a large island involved in pathogenicity.</title>
        <authorList>
            <person name="Gartemann K.-H."/>
            <person name="Abt B."/>
            <person name="Bekel T."/>
            <person name="Burger A."/>
            <person name="Engemann J."/>
            <person name="Fluegel M."/>
            <person name="Gaigalat L."/>
            <person name="Goesmann A."/>
            <person name="Graefen I."/>
            <person name="Kalinowski J."/>
            <person name="Kaup O."/>
            <person name="Kirchner O."/>
            <person name="Krause L."/>
            <person name="Linke B."/>
            <person name="McHardy A."/>
            <person name="Meyer F."/>
            <person name="Pohle S."/>
            <person name="Rueckert C."/>
            <person name="Schneiker S."/>
            <person name="Zellermann E.-M."/>
            <person name="Puehler A."/>
            <person name="Eichenlaub R."/>
            <person name="Kaiser O."/>
            <person name="Bartels D."/>
        </authorList>
    </citation>
    <scope>NUCLEOTIDE SEQUENCE [LARGE SCALE GENOMIC DNA]</scope>
    <source>
        <strain>NCPPB 382</strain>
    </source>
</reference>
<dbReference type="EMBL" id="AM711867">
    <property type="protein sequence ID" value="CAN02073.1"/>
    <property type="molecule type" value="Genomic_DNA"/>
</dbReference>
<dbReference type="RefSeq" id="WP_012038697.1">
    <property type="nucleotide sequence ID" value="NC_009480.1"/>
</dbReference>
<dbReference type="SMR" id="A5CSK2"/>
<dbReference type="GeneID" id="92948003"/>
<dbReference type="KEGG" id="cmi:CMM_2010"/>
<dbReference type="eggNOG" id="COG0291">
    <property type="taxonomic scope" value="Bacteria"/>
</dbReference>
<dbReference type="HOGENOM" id="CLU_169643_4_2_11"/>
<dbReference type="OrthoDB" id="9804851at2"/>
<dbReference type="Proteomes" id="UP000001564">
    <property type="component" value="Chromosome"/>
</dbReference>
<dbReference type="GO" id="GO:0022625">
    <property type="term" value="C:cytosolic large ribosomal subunit"/>
    <property type="evidence" value="ECO:0007669"/>
    <property type="project" value="TreeGrafter"/>
</dbReference>
<dbReference type="GO" id="GO:0003735">
    <property type="term" value="F:structural constituent of ribosome"/>
    <property type="evidence" value="ECO:0007669"/>
    <property type="project" value="InterPro"/>
</dbReference>
<dbReference type="GO" id="GO:0006412">
    <property type="term" value="P:translation"/>
    <property type="evidence" value="ECO:0007669"/>
    <property type="project" value="UniProtKB-UniRule"/>
</dbReference>
<dbReference type="FunFam" id="4.10.410.60:FF:000001">
    <property type="entry name" value="50S ribosomal protein L35"/>
    <property type="match status" value="1"/>
</dbReference>
<dbReference type="Gene3D" id="4.10.410.60">
    <property type="match status" value="1"/>
</dbReference>
<dbReference type="HAMAP" id="MF_00514">
    <property type="entry name" value="Ribosomal_bL35"/>
    <property type="match status" value="1"/>
</dbReference>
<dbReference type="InterPro" id="IPR001706">
    <property type="entry name" value="Ribosomal_bL35"/>
</dbReference>
<dbReference type="InterPro" id="IPR021137">
    <property type="entry name" value="Ribosomal_bL35-like"/>
</dbReference>
<dbReference type="InterPro" id="IPR018265">
    <property type="entry name" value="Ribosomal_bL35_CS"/>
</dbReference>
<dbReference type="InterPro" id="IPR037229">
    <property type="entry name" value="Ribosomal_bL35_sf"/>
</dbReference>
<dbReference type="NCBIfam" id="TIGR00001">
    <property type="entry name" value="rpmI_bact"/>
    <property type="match status" value="1"/>
</dbReference>
<dbReference type="PANTHER" id="PTHR33343">
    <property type="entry name" value="54S RIBOSOMAL PROTEIN BL35M"/>
    <property type="match status" value="1"/>
</dbReference>
<dbReference type="PANTHER" id="PTHR33343:SF1">
    <property type="entry name" value="LARGE RIBOSOMAL SUBUNIT PROTEIN BL35M"/>
    <property type="match status" value="1"/>
</dbReference>
<dbReference type="Pfam" id="PF01632">
    <property type="entry name" value="Ribosomal_L35p"/>
    <property type="match status" value="1"/>
</dbReference>
<dbReference type="PRINTS" id="PR00064">
    <property type="entry name" value="RIBOSOMALL35"/>
</dbReference>
<dbReference type="SUPFAM" id="SSF143034">
    <property type="entry name" value="L35p-like"/>
    <property type="match status" value="1"/>
</dbReference>
<dbReference type="PROSITE" id="PS00936">
    <property type="entry name" value="RIBOSOMAL_L35"/>
    <property type="match status" value="1"/>
</dbReference>
<sequence>MPKQKTHSGAKKRFKVTGTGKIMKQQAGMRHNLEVKSSGRKARLNQDQPLAKADMKVAKKLLGR</sequence>
<proteinExistence type="inferred from homology"/>
<evidence type="ECO:0000255" key="1">
    <source>
        <dbReference type="HAMAP-Rule" id="MF_00514"/>
    </source>
</evidence>
<evidence type="ECO:0000305" key="2"/>
<comment type="similarity">
    <text evidence="1">Belongs to the bacterial ribosomal protein bL35 family.</text>
</comment>
<keyword id="KW-0687">Ribonucleoprotein</keyword>
<keyword id="KW-0689">Ribosomal protein</keyword>
<name>RL35_CLAM3</name>
<gene>
    <name evidence="1" type="primary">rpmI</name>
    <name type="ordered locus">CMM_2010</name>
</gene>
<accession>A5CSK2</accession>